<gene>
    <name type="ordered locus">spr1688</name>
</gene>
<reference key="1">
    <citation type="journal article" date="2001" name="J. Bacteriol.">
        <title>Genome of the bacterium Streptococcus pneumoniae strain R6.</title>
        <authorList>
            <person name="Hoskins J."/>
            <person name="Alborn W.E. Jr."/>
            <person name="Arnold J."/>
            <person name="Blaszczak L.C."/>
            <person name="Burgett S."/>
            <person name="DeHoff B.S."/>
            <person name="Estrem S.T."/>
            <person name="Fritz L."/>
            <person name="Fu D.-J."/>
            <person name="Fuller W."/>
            <person name="Geringer C."/>
            <person name="Gilmour R."/>
            <person name="Glass J.S."/>
            <person name="Khoja H."/>
            <person name="Kraft A.R."/>
            <person name="Lagace R.E."/>
            <person name="LeBlanc D.J."/>
            <person name="Lee L.N."/>
            <person name="Lefkowitz E.J."/>
            <person name="Lu J."/>
            <person name="Matsushima P."/>
            <person name="McAhren S.M."/>
            <person name="McHenney M."/>
            <person name="McLeaster K."/>
            <person name="Mundy C.W."/>
            <person name="Nicas T.I."/>
            <person name="Norris F.H."/>
            <person name="O'Gara M."/>
            <person name="Peery R.B."/>
            <person name="Robertson G.T."/>
            <person name="Rockey P."/>
            <person name="Sun P.-M."/>
            <person name="Winkler M.E."/>
            <person name="Yang Y."/>
            <person name="Young-Bellido M."/>
            <person name="Zhao G."/>
            <person name="Zook C.A."/>
            <person name="Baltz R.H."/>
            <person name="Jaskunas S.R."/>
            <person name="Rosteck P.R. Jr."/>
            <person name="Skatrud P.L."/>
            <person name="Glass J.I."/>
        </authorList>
    </citation>
    <scope>NUCLEOTIDE SEQUENCE [LARGE SCALE GENOMIC DNA]</scope>
    <source>
        <strain>ATCC BAA-255 / R6</strain>
    </source>
</reference>
<proteinExistence type="inferred from homology"/>
<name>YIDD_STRR6</name>
<accession>Q8DNJ1</accession>
<dbReference type="EMBL" id="AE007317">
    <property type="protein sequence ID" value="AAL00491.1"/>
    <property type="molecule type" value="Genomic_DNA"/>
</dbReference>
<dbReference type="PIR" id="F98082">
    <property type="entry name" value="F98082"/>
</dbReference>
<dbReference type="RefSeq" id="NP_359280.1">
    <property type="nucleotide sequence ID" value="NC_003098.1"/>
</dbReference>
<dbReference type="STRING" id="171101.spr1688"/>
<dbReference type="KEGG" id="spr:spr1688"/>
<dbReference type="PATRIC" id="fig|171101.6.peg.1826"/>
<dbReference type="eggNOG" id="COG0759">
    <property type="taxonomic scope" value="Bacteria"/>
</dbReference>
<dbReference type="HOGENOM" id="CLU_144811_5_2_9"/>
<dbReference type="Proteomes" id="UP000000586">
    <property type="component" value="Chromosome"/>
</dbReference>
<dbReference type="GO" id="GO:0005886">
    <property type="term" value="C:plasma membrane"/>
    <property type="evidence" value="ECO:0007669"/>
    <property type="project" value="UniProtKB-SubCell"/>
</dbReference>
<dbReference type="HAMAP" id="MF_00386">
    <property type="entry name" value="UPF0161_YidD"/>
    <property type="match status" value="1"/>
</dbReference>
<dbReference type="InterPro" id="IPR002696">
    <property type="entry name" value="Membr_insert_effic_factor_YidD"/>
</dbReference>
<dbReference type="NCBIfam" id="TIGR00278">
    <property type="entry name" value="membrane protein insertion efficiency factor YidD"/>
    <property type="match status" value="1"/>
</dbReference>
<dbReference type="PANTHER" id="PTHR33383">
    <property type="entry name" value="MEMBRANE PROTEIN INSERTION EFFICIENCY FACTOR-RELATED"/>
    <property type="match status" value="1"/>
</dbReference>
<dbReference type="PANTHER" id="PTHR33383:SF1">
    <property type="entry name" value="MEMBRANE PROTEIN INSERTION EFFICIENCY FACTOR-RELATED"/>
    <property type="match status" value="1"/>
</dbReference>
<dbReference type="Pfam" id="PF01809">
    <property type="entry name" value="YidD"/>
    <property type="match status" value="1"/>
</dbReference>
<dbReference type="SMART" id="SM01234">
    <property type="entry name" value="Haemolytic"/>
    <property type="match status" value="1"/>
</dbReference>
<sequence length="80" mass="9336">MKRILIALVRFYQRFISPVFPPSCRFELTCSNYMIQAIEKHGFKGVLMGLARILRCHPWSKTGKDPVPDHFSLKRNQEGE</sequence>
<keyword id="KW-1003">Cell membrane</keyword>
<keyword id="KW-0472">Membrane</keyword>
<keyword id="KW-1185">Reference proteome</keyword>
<feature type="chain" id="PRO_0000171882" description="Putative membrane protein insertion efficiency factor">
    <location>
        <begin position="1"/>
        <end position="80"/>
    </location>
</feature>
<feature type="region of interest" description="Disordered" evidence="2">
    <location>
        <begin position="61"/>
        <end position="80"/>
    </location>
</feature>
<feature type="compositionally biased region" description="Basic and acidic residues" evidence="2">
    <location>
        <begin position="62"/>
        <end position="80"/>
    </location>
</feature>
<protein>
    <recommendedName>
        <fullName evidence="1">Putative membrane protein insertion efficiency factor</fullName>
    </recommendedName>
</protein>
<organism>
    <name type="scientific">Streptococcus pneumoniae (strain ATCC BAA-255 / R6)</name>
    <dbReference type="NCBI Taxonomy" id="171101"/>
    <lineage>
        <taxon>Bacteria</taxon>
        <taxon>Bacillati</taxon>
        <taxon>Bacillota</taxon>
        <taxon>Bacilli</taxon>
        <taxon>Lactobacillales</taxon>
        <taxon>Streptococcaceae</taxon>
        <taxon>Streptococcus</taxon>
    </lineage>
</organism>
<comment type="function">
    <text evidence="1">Could be involved in insertion of integral membrane proteins into the membrane.</text>
</comment>
<comment type="subcellular location">
    <subcellularLocation>
        <location evidence="1">Cell membrane</location>
        <topology evidence="1">Peripheral membrane protein</topology>
        <orientation evidence="1">Cytoplasmic side</orientation>
    </subcellularLocation>
</comment>
<comment type="similarity">
    <text evidence="1">Belongs to the UPF0161 family.</text>
</comment>
<evidence type="ECO:0000255" key="1">
    <source>
        <dbReference type="HAMAP-Rule" id="MF_00386"/>
    </source>
</evidence>
<evidence type="ECO:0000256" key="2">
    <source>
        <dbReference type="SAM" id="MobiDB-lite"/>
    </source>
</evidence>